<feature type="chain" id="PRO_0000355468" description="Large ribosomal subunit protein bL20">
    <location>
        <begin position="1"/>
        <end position="117"/>
    </location>
</feature>
<gene>
    <name evidence="1" type="primary">rplT</name>
    <name type="ordered locus">LAF_1309</name>
</gene>
<reference key="1">
    <citation type="journal article" date="2008" name="DNA Res.">
        <title>Comparative genome analysis of Lactobacillus reuteri and Lactobacillus fermentum reveal a genomic island for reuterin and cobalamin production.</title>
        <authorList>
            <person name="Morita H."/>
            <person name="Toh H."/>
            <person name="Fukuda S."/>
            <person name="Horikawa H."/>
            <person name="Oshima K."/>
            <person name="Suzuki T."/>
            <person name="Murakami M."/>
            <person name="Hisamatsu S."/>
            <person name="Kato Y."/>
            <person name="Takizawa T."/>
            <person name="Fukuoka H."/>
            <person name="Yoshimura T."/>
            <person name="Itoh K."/>
            <person name="O'Sullivan D.J."/>
            <person name="McKay L.L."/>
            <person name="Ohno H."/>
            <person name="Kikuchi J."/>
            <person name="Masaoka T."/>
            <person name="Hattori M."/>
        </authorList>
    </citation>
    <scope>NUCLEOTIDE SEQUENCE [LARGE SCALE GENOMIC DNA]</scope>
    <source>
        <strain>NBRC 3956 / LMG 18251</strain>
    </source>
</reference>
<keyword id="KW-1185">Reference proteome</keyword>
<keyword id="KW-0687">Ribonucleoprotein</keyword>
<keyword id="KW-0689">Ribosomal protein</keyword>
<keyword id="KW-0694">RNA-binding</keyword>
<keyword id="KW-0699">rRNA-binding</keyword>
<evidence type="ECO:0000255" key="1">
    <source>
        <dbReference type="HAMAP-Rule" id="MF_00382"/>
    </source>
</evidence>
<evidence type="ECO:0000305" key="2"/>
<organism>
    <name type="scientific">Limosilactobacillus fermentum (strain NBRC 3956 / LMG 18251)</name>
    <name type="common">Lactobacillus fermentum</name>
    <dbReference type="NCBI Taxonomy" id="334390"/>
    <lineage>
        <taxon>Bacteria</taxon>
        <taxon>Bacillati</taxon>
        <taxon>Bacillota</taxon>
        <taxon>Bacilli</taxon>
        <taxon>Lactobacillales</taxon>
        <taxon>Lactobacillaceae</taxon>
        <taxon>Limosilactobacillus</taxon>
    </lineage>
</organism>
<proteinExistence type="inferred from homology"/>
<comment type="function">
    <text evidence="1">Binds directly to 23S ribosomal RNA and is necessary for the in vitro assembly process of the 50S ribosomal subunit. It is not involved in the protein synthesizing functions of that subunit.</text>
</comment>
<comment type="similarity">
    <text evidence="1">Belongs to the bacterial ribosomal protein bL20 family.</text>
</comment>
<protein>
    <recommendedName>
        <fullName evidence="1">Large ribosomal subunit protein bL20</fullName>
    </recommendedName>
    <alternativeName>
        <fullName evidence="2">50S ribosomal protein L20</fullName>
    </alternativeName>
</protein>
<name>RL20_LIMF3</name>
<dbReference type="EMBL" id="AP008937">
    <property type="protein sequence ID" value="BAG27645.1"/>
    <property type="molecule type" value="Genomic_DNA"/>
</dbReference>
<dbReference type="RefSeq" id="WP_003686209.1">
    <property type="nucleotide sequence ID" value="NC_010610.1"/>
</dbReference>
<dbReference type="SMR" id="B2GDB3"/>
<dbReference type="GeneID" id="83714241"/>
<dbReference type="KEGG" id="lfe:LAF_1309"/>
<dbReference type="eggNOG" id="COG0292">
    <property type="taxonomic scope" value="Bacteria"/>
</dbReference>
<dbReference type="HOGENOM" id="CLU_123265_0_1_9"/>
<dbReference type="Proteomes" id="UP000001697">
    <property type="component" value="Chromosome"/>
</dbReference>
<dbReference type="GO" id="GO:1990904">
    <property type="term" value="C:ribonucleoprotein complex"/>
    <property type="evidence" value="ECO:0007669"/>
    <property type="project" value="UniProtKB-KW"/>
</dbReference>
<dbReference type="GO" id="GO:0005840">
    <property type="term" value="C:ribosome"/>
    <property type="evidence" value="ECO:0007669"/>
    <property type="project" value="UniProtKB-KW"/>
</dbReference>
<dbReference type="GO" id="GO:0019843">
    <property type="term" value="F:rRNA binding"/>
    <property type="evidence" value="ECO:0007669"/>
    <property type="project" value="UniProtKB-UniRule"/>
</dbReference>
<dbReference type="GO" id="GO:0003735">
    <property type="term" value="F:structural constituent of ribosome"/>
    <property type="evidence" value="ECO:0007669"/>
    <property type="project" value="InterPro"/>
</dbReference>
<dbReference type="GO" id="GO:0000027">
    <property type="term" value="P:ribosomal large subunit assembly"/>
    <property type="evidence" value="ECO:0007669"/>
    <property type="project" value="UniProtKB-UniRule"/>
</dbReference>
<dbReference type="GO" id="GO:0006412">
    <property type="term" value="P:translation"/>
    <property type="evidence" value="ECO:0007669"/>
    <property type="project" value="InterPro"/>
</dbReference>
<dbReference type="CDD" id="cd07026">
    <property type="entry name" value="Ribosomal_L20"/>
    <property type="match status" value="1"/>
</dbReference>
<dbReference type="FunFam" id="1.10.1900.20:FF:000001">
    <property type="entry name" value="50S ribosomal protein L20"/>
    <property type="match status" value="1"/>
</dbReference>
<dbReference type="Gene3D" id="6.10.160.10">
    <property type="match status" value="1"/>
</dbReference>
<dbReference type="Gene3D" id="1.10.1900.20">
    <property type="entry name" value="Ribosomal protein L20"/>
    <property type="match status" value="1"/>
</dbReference>
<dbReference type="HAMAP" id="MF_00382">
    <property type="entry name" value="Ribosomal_bL20"/>
    <property type="match status" value="1"/>
</dbReference>
<dbReference type="InterPro" id="IPR005813">
    <property type="entry name" value="Ribosomal_bL20"/>
</dbReference>
<dbReference type="InterPro" id="IPR049946">
    <property type="entry name" value="RIBOSOMAL_L20_CS"/>
</dbReference>
<dbReference type="InterPro" id="IPR035566">
    <property type="entry name" value="Ribosomal_protein_bL20_C"/>
</dbReference>
<dbReference type="NCBIfam" id="TIGR01032">
    <property type="entry name" value="rplT_bact"/>
    <property type="match status" value="1"/>
</dbReference>
<dbReference type="PANTHER" id="PTHR10986">
    <property type="entry name" value="39S RIBOSOMAL PROTEIN L20"/>
    <property type="match status" value="1"/>
</dbReference>
<dbReference type="Pfam" id="PF00453">
    <property type="entry name" value="Ribosomal_L20"/>
    <property type="match status" value="1"/>
</dbReference>
<dbReference type="PRINTS" id="PR00062">
    <property type="entry name" value="RIBOSOMALL20"/>
</dbReference>
<dbReference type="SUPFAM" id="SSF74731">
    <property type="entry name" value="Ribosomal protein L20"/>
    <property type="match status" value="1"/>
</dbReference>
<dbReference type="PROSITE" id="PS00937">
    <property type="entry name" value="RIBOSOMAL_L20"/>
    <property type="match status" value="1"/>
</dbReference>
<accession>B2GDB3</accession>
<sequence>MRVKGGTVTRARRKRIMKLAKGYTGSKHRLFKTAKDQVMKSYTYAFRDRKVNKRNFRELWIARINAGARMNGLSYSKLMHGLKLANIDINRKMLADLAVNDADAFKAVVDEAKKALN</sequence>